<evidence type="ECO:0000305" key="1"/>
<sequence>GAAILTNDNAMDALQDL</sequence>
<feature type="chain" id="PRO_0000182588" description="Flagellin">
    <location>
        <begin position="1"/>
        <end position="17" status="greater than"/>
    </location>
</feature>
<feature type="non-terminal residue">
    <location>
        <position position="17"/>
    </location>
</feature>
<accession>P35634</accession>
<protein>
    <recommendedName>
        <fullName>Flagellin</fullName>
    </recommendedName>
</protein>
<dbReference type="GO" id="GO:0009288">
    <property type="term" value="C:bacterial-type flagellum"/>
    <property type="evidence" value="ECO:0007669"/>
    <property type="project" value="UniProtKB-SubCell"/>
</dbReference>
<dbReference type="GO" id="GO:0005576">
    <property type="term" value="C:extracellular region"/>
    <property type="evidence" value="ECO:0007669"/>
    <property type="project" value="UniProtKB-SubCell"/>
</dbReference>
<proteinExistence type="evidence at protein level"/>
<reference key="1">
    <citation type="journal article" date="1993" name="Infect. Immun.">
        <title>Characterization of Bartonella bacilliformis flagella and effect of antiflagellin antibodies on invasion of human erythrocytes.</title>
        <authorList>
            <person name="Scherer D.C."/>
            <person name="Deburon-Connors I."/>
            <person name="Minnick M.F."/>
        </authorList>
    </citation>
    <scope>PROTEIN SEQUENCE</scope>
    <source>
        <strain>ATCC 35686 / KC584 / NCTC 12139</strain>
    </source>
</reference>
<name>FLA2_BARBA</name>
<organism>
    <name type="scientific">Bartonella bacilliformis</name>
    <dbReference type="NCBI Taxonomy" id="774"/>
    <lineage>
        <taxon>Bacteria</taxon>
        <taxon>Pseudomonadati</taxon>
        <taxon>Pseudomonadota</taxon>
        <taxon>Alphaproteobacteria</taxon>
        <taxon>Hyphomicrobiales</taxon>
        <taxon>Bartonellaceae</taxon>
        <taxon>Bartonella</taxon>
    </lineage>
</organism>
<keyword id="KW-0975">Bacterial flagellum</keyword>
<keyword id="KW-0903">Direct protein sequencing</keyword>
<keyword id="KW-0964">Secreted</keyword>
<comment type="function">
    <text>Flagellin is the subunit protein which polymerizes to form the filaments of bacterial flagella. Flagella are an important component in the invasiveness of B.bacilliformis.</text>
</comment>
<comment type="subcellular location">
    <subcellularLocation>
        <location>Secreted</location>
    </subcellularLocation>
    <subcellularLocation>
        <location>Bacterial flagellum</location>
    </subcellularLocation>
</comment>
<comment type="similarity">
    <text evidence="1">Belongs to the bacterial flagellin family.</text>
</comment>